<feature type="chain" id="PRO_0000178800" description="Lipoprotein signal peptidase">
    <location>
        <begin position="1"/>
        <end position="165"/>
    </location>
</feature>
<feature type="transmembrane region" description="Helical" evidence="1">
    <location>
        <begin position="11"/>
        <end position="31"/>
    </location>
</feature>
<feature type="transmembrane region" description="Helical" evidence="1">
    <location>
        <begin position="41"/>
        <end position="61"/>
    </location>
</feature>
<feature type="transmembrane region" description="Helical" evidence="1">
    <location>
        <begin position="64"/>
        <end position="84"/>
    </location>
</feature>
<feature type="transmembrane region" description="Helical" evidence="1">
    <location>
        <begin position="92"/>
        <end position="112"/>
    </location>
</feature>
<feature type="transmembrane region" description="Helical" evidence="1">
    <location>
        <begin position="132"/>
        <end position="152"/>
    </location>
</feature>
<feature type="active site" evidence="1">
    <location>
        <position position="122"/>
    </location>
</feature>
<feature type="active site" evidence="1">
    <location>
        <position position="140"/>
    </location>
</feature>
<protein>
    <recommendedName>
        <fullName evidence="1">Lipoprotein signal peptidase</fullName>
        <ecNumber evidence="1">3.4.23.36</ecNumber>
    </recommendedName>
    <alternativeName>
        <fullName evidence="1">Prolipoprotein signal peptidase</fullName>
    </alternativeName>
    <alternativeName>
        <fullName evidence="1">Signal peptidase II</fullName>
        <shortName evidence="1">SPase II</shortName>
    </alternativeName>
</protein>
<sequence length="165" mass="18600">MSSSVSSKTRYWVLALAAIVLDQWSKWAVLSSFQYRERVNVIPSFFDLTLVYNPGAAFSFLADQGGWQKYFFLVLAVAVSAYLVRAILRDEFATLGKTGAAMIIGGALGNVIDRLIHGHVVDFLLFYWQNWFYPAFNIADSFICVGAVLAVLDNIVHRKTQEEKY</sequence>
<evidence type="ECO:0000255" key="1">
    <source>
        <dbReference type="HAMAP-Rule" id="MF_00161"/>
    </source>
</evidence>
<evidence type="ECO:0000305" key="2"/>
<name>LSPA_NEIMB</name>
<gene>
    <name evidence="1" type="primary">lspA</name>
    <name type="synonym">lsp</name>
    <name type="ordered locus">NMB1832</name>
</gene>
<dbReference type="EC" id="3.4.23.36" evidence="1"/>
<dbReference type="EMBL" id="AE002098">
    <property type="protein sequence ID" value="AAF42167.1"/>
    <property type="status" value="ALT_INIT"/>
    <property type="molecule type" value="Genomic_DNA"/>
</dbReference>
<dbReference type="PIR" id="E81038">
    <property type="entry name" value="E81038"/>
</dbReference>
<dbReference type="RefSeq" id="NP_274829.1">
    <property type="nucleotide sequence ID" value="NC_003112.2"/>
</dbReference>
<dbReference type="SMR" id="P65265"/>
<dbReference type="FunCoup" id="P65265">
    <property type="interactions" value="291"/>
</dbReference>
<dbReference type="STRING" id="122586.NMB1832"/>
<dbReference type="PaxDb" id="122586-NMB1832"/>
<dbReference type="KEGG" id="nme:NMB1832"/>
<dbReference type="PATRIC" id="fig|122586.8.peg.2332"/>
<dbReference type="HOGENOM" id="CLU_083252_4_0_4"/>
<dbReference type="InParanoid" id="P65265"/>
<dbReference type="OrthoDB" id="9810259at2"/>
<dbReference type="UniPathway" id="UPA00665"/>
<dbReference type="Proteomes" id="UP000000425">
    <property type="component" value="Chromosome"/>
</dbReference>
<dbReference type="GO" id="GO:0005886">
    <property type="term" value="C:plasma membrane"/>
    <property type="evidence" value="ECO:0000318"/>
    <property type="project" value="GO_Central"/>
</dbReference>
<dbReference type="GO" id="GO:0004190">
    <property type="term" value="F:aspartic-type endopeptidase activity"/>
    <property type="evidence" value="ECO:0007669"/>
    <property type="project" value="UniProtKB-UniRule"/>
</dbReference>
<dbReference type="GO" id="GO:0004175">
    <property type="term" value="F:endopeptidase activity"/>
    <property type="evidence" value="ECO:0000318"/>
    <property type="project" value="GO_Central"/>
</dbReference>
<dbReference type="GO" id="GO:0006508">
    <property type="term" value="P:proteolysis"/>
    <property type="evidence" value="ECO:0007669"/>
    <property type="project" value="UniProtKB-KW"/>
</dbReference>
<dbReference type="HAMAP" id="MF_00161">
    <property type="entry name" value="LspA"/>
    <property type="match status" value="1"/>
</dbReference>
<dbReference type="InterPro" id="IPR001872">
    <property type="entry name" value="Peptidase_A8"/>
</dbReference>
<dbReference type="NCBIfam" id="TIGR00077">
    <property type="entry name" value="lspA"/>
    <property type="match status" value="1"/>
</dbReference>
<dbReference type="PANTHER" id="PTHR33695">
    <property type="entry name" value="LIPOPROTEIN SIGNAL PEPTIDASE"/>
    <property type="match status" value="1"/>
</dbReference>
<dbReference type="PANTHER" id="PTHR33695:SF1">
    <property type="entry name" value="LIPOPROTEIN SIGNAL PEPTIDASE"/>
    <property type="match status" value="1"/>
</dbReference>
<dbReference type="Pfam" id="PF01252">
    <property type="entry name" value="Peptidase_A8"/>
    <property type="match status" value="1"/>
</dbReference>
<dbReference type="PRINTS" id="PR00781">
    <property type="entry name" value="LIPOSIGPTASE"/>
</dbReference>
<dbReference type="PROSITE" id="PS00855">
    <property type="entry name" value="SPASE_II"/>
    <property type="match status" value="1"/>
</dbReference>
<comment type="function">
    <text evidence="1">This protein specifically catalyzes the removal of signal peptides from prolipoproteins.</text>
</comment>
<comment type="catalytic activity">
    <reaction evidence="1">
        <text>Release of signal peptides from bacterial membrane prolipoproteins. Hydrolyzes -Xaa-Yaa-Zaa-|-(S,diacylglyceryl)Cys-, in which Xaa is hydrophobic (preferably Leu), and Yaa (Ala or Ser) and Zaa (Gly or Ala) have small, neutral side chains.</text>
        <dbReference type="EC" id="3.4.23.36"/>
    </reaction>
</comment>
<comment type="pathway">
    <text evidence="1">Protein modification; lipoprotein biosynthesis (signal peptide cleavage).</text>
</comment>
<comment type="subcellular location">
    <subcellularLocation>
        <location evidence="1">Cell inner membrane</location>
        <topology evidence="1">Multi-pass membrane protein</topology>
    </subcellularLocation>
</comment>
<comment type="similarity">
    <text evidence="1">Belongs to the peptidase A8 family.</text>
</comment>
<comment type="sequence caution" evidence="2">
    <conflict type="erroneous initiation">
        <sequence resource="EMBL-CDS" id="AAF42167"/>
    </conflict>
</comment>
<reference key="1">
    <citation type="journal article" date="2000" name="Science">
        <title>Complete genome sequence of Neisseria meningitidis serogroup B strain MC58.</title>
        <authorList>
            <person name="Tettelin H."/>
            <person name="Saunders N.J."/>
            <person name="Heidelberg J.F."/>
            <person name="Jeffries A.C."/>
            <person name="Nelson K.E."/>
            <person name="Eisen J.A."/>
            <person name="Ketchum K.A."/>
            <person name="Hood D.W."/>
            <person name="Peden J.F."/>
            <person name="Dodson R.J."/>
            <person name="Nelson W.C."/>
            <person name="Gwinn M.L."/>
            <person name="DeBoy R.T."/>
            <person name="Peterson J.D."/>
            <person name="Hickey E.K."/>
            <person name="Haft D.H."/>
            <person name="Salzberg S.L."/>
            <person name="White O."/>
            <person name="Fleischmann R.D."/>
            <person name="Dougherty B.A."/>
            <person name="Mason T.M."/>
            <person name="Ciecko A."/>
            <person name="Parksey D.S."/>
            <person name="Blair E."/>
            <person name="Cittone H."/>
            <person name="Clark E.B."/>
            <person name="Cotton M.D."/>
            <person name="Utterback T.R."/>
            <person name="Khouri H.M."/>
            <person name="Qin H."/>
            <person name="Vamathevan J.J."/>
            <person name="Gill J."/>
            <person name="Scarlato V."/>
            <person name="Masignani V."/>
            <person name="Pizza M."/>
            <person name="Grandi G."/>
            <person name="Sun L."/>
            <person name="Smith H.O."/>
            <person name="Fraser C.M."/>
            <person name="Moxon E.R."/>
            <person name="Rappuoli R."/>
            <person name="Venter J.C."/>
        </authorList>
    </citation>
    <scope>NUCLEOTIDE SEQUENCE [LARGE SCALE GENOMIC DNA]</scope>
    <source>
        <strain>ATCC BAA-335 / MC58</strain>
    </source>
</reference>
<organism>
    <name type="scientific">Neisseria meningitidis serogroup B (strain ATCC BAA-335 / MC58)</name>
    <dbReference type="NCBI Taxonomy" id="122586"/>
    <lineage>
        <taxon>Bacteria</taxon>
        <taxon>Pseudomonadati</taxon>
        <taxon>Pseudomonadota</taxon>
        <taxon>Betaproteobacteria</taxon>
        <taxon>Neisseriales</taxon>
        <taxon>Neisseriaceae</taxon>
        <taxon>Neisseria</taxon>
    </lineage>
</organism>
<accession>P65265</accession>
<accession>Q9JVY3</accession>
<accession>Q9JXY8</accession>
<keyword id="KW-0064">Aspartyl protease</keyword>
<keyword id="KW-0997">Cell inner membrane</keyword>
<keyword id="KW-1003">Cell membrane</keyword>
<keyword id="KW-0378">Hydrolase</keyword>
<keyword id="KW-0472">Membrane</keyword>
<keyword id="KW-0645">Protease</keyword>
<keyword id="KW-1185">Reference proteome</keyword>
<keyword id="KW-0812">Transmembrane</keyword>
<keyword id="KW-1133">Transmembrane helix</keyword>
<proteinExistence type="inferred from homology"/>